<evidence type="ECO:0000255" key="1">
    <source>
        <dbReference type="HAMAP-Rule" id="MF_00338"/>
    </source>
</evidence>
<reference key="1">
    <citation type="journal article" date="2007" name="PLoS ONE">
        <title>Genome sequencing shows that European isolates of Francisella tularensis subspecies tularensis are almost identical to US laboratory strain Schu S4.</title>
        <authorList>
            <person name="Chaudhuri R.R."/>
            <person name="Ren C.-P."/>
            <person name="Desmond L."/>
            <person name="Vincent G.A."/>
            <person name="Silman N.J."/>
            <person name="Brehm J.K."/>
            <person name="Elmore M.J."/>
            <person name="Hudson M.J."/>
            <person name="Forsman M."/>
            <person name="Isherwood K.E."/>
            <person name="Gurycova D."/>
            <person name="Minton N.P."/>
            <person name="Titball R.W."/>
            <person name="Pallen M.J."/>
            <person name="Vipond R."/>
        </authorList>
    </citation>
    <scope>NUCLEOTIDE SEQUENCE [LARGE SCALE GENOMIC DNA]</scope>
    <source>
        <strain>FSC 198</strain>
    </source>
</reference>
<name>Y954_FRAT1</name>
<feature type="chain" id="PRO_1000012997" description="UPF0145 protein FTF0954c">
    <location>
        <begin position="1"/>
        <end position="106"/>
    </location>
</feature>
<dbReference type="EMBL" id="AM286280">
    <property type="protein sequence ID" value="CAL08970.1"/>
    <property type="molecule type" value="Genomic_DNA"/>
</dbReference>
<dbReference type="RefSeq" id="WP_003016377.1">
    <property type="nucleotide sequence ID" value="NC_008245.1"/>
</dbReference>
<dbReference type="SMR" id="Q14HQ0"/>
<dbReference type="KEGG" id="ftf:FTF0954c"/>
<dbReference type="HOGENOM" id="CLU_117144_1_1_6"/>
<dbReference type="Gene3D" id="3.30.110.70">
    <property type="entry name" value="Hypothetical protein apc22750. Chain B"/>
    <property type="match status" value="1"/>
</dbReference>
<dbReference type="HAMAP" id="MF_00338">
    <property type="entry name" value="UPF0145"/>
    <property type="match status" value="1"/>
</dbReference>
<dbReference type="InterPro" id="IPR035439">
    <property type="entry name" value="UPF0145_dom_sf"/>
</dbReference>
<dbReference type="InterPro" id="IPR002765">
    <property type="entry name" value="UPF0145_YbjQ-like"/>
</dbReference>
<dbReference type="PANTHER" id="PTHR34068">
    <property type="entry name" value="UPF0145 PROTEIN YBJQ"/>
    <property type="match status" value="1"/>
</dbReference>
<dbReference type="PANTHER" id="PTHR34068:SF1">
    <property type="entry name" value="UPF0145 PROTEIN YBJQ"/>
    <property type="match status" value="1"/>
</dbReference>
<dbReference type="Pfam" id="PF01906">
    <property type="entry name" value="YbjQ_1"/>
    <property type="match status" value="1"/>
</dbReference>
<dbReference type="SUPFAM" id="SSF117782">
    <property type="entry name" value="YbjQ-like"/>
    <property type="match status" value="1"/>
</dbReference>
<protein>
    <recommendedName>
        <fullName evidence="1">UPF0145 protein FTF0954c</fullName>
    </recommendedName>
</protein>
<comment type="similarity">
    <text evidence="1">Belongs to the UPF0145 family.</text>
</comment>
<accession>Q14HQ0</accession>
<gene>
    <name type="ordered locus">FTF0954c</name>
</gene>
<sequence length="106" mass="11289">MILTTADTLGKREIIEYKGLVTGIIVRTPTITQGILGGLKNIIGGKNTSYTNVCKEARLHAEQEMINQAKELGANAIVAIRYDSSSLGGNTSGTEVFCYGTAVVVR</sequence>
<organism>
    <name type="scientific">Francisella tularensis subsp. tularensis (strain FSC 198)</name>
    <dbReference type="NCBI Taxonomy" id="393115"/>
    <lineage>
        <taxon>Bacteria</taxon>
        <taxon>Pseudomonadati</taxon>
        <taxon>Pseudomonadota</taxon>
        <taxon>Gammaproteobacteria</taxon>
        <taxon>Thiotrichales</taxon>
        <taxon>Francisellaceae</taxon>
        <taxon>Francisella</taxon>
    </lineage>
</organism>
<proteinExistence type="inferred from homology"/>